<proteinExistence type="inferred from homology"/>
<comment type="function">
    <text evidence="1">Plays a critical role in the incorporation of lipoproteins in the outer membrane after they are released by the LolA protein.</text>
</comment>
<comment type="subunit">
    <text evidence="1">Monomer.</text>
</comment>
<comment type="subcellular location">
    <subcellularLocation>
        <location evidence="1">Cell outer membrane</location>
        <topology evidence="1">Lipid-anchor</topology>
    </subcellularLocation>
</comment>
<comment type="similarity">
    <text evidence="1">Belongs to the LolB family.</text>
</comment>
<name>LOLB_SHEAM</name>
<sequence length="207" mass="22466">MINLRRFTKFTLAGLTALSLLGGCSVTPKVALQPVSVENASDAKAWELKGKLLIRTNGDKVSANLFWLNTPDNAELRLTSMLGTTVLLLTQNRDGATLEVDGKRYSDLSPQRLLDGLSGFTLPIDALPFWITGQPMAGDEVEFDTLNRPKTIISADGEWTINISSWQTQSGAPVPRMLELTHASAVIKLQTNEWQALANATGSKGAR</sequence>
<evidence type="ECO:0000255" key="1">
    <source>
        <dbReference type="HAMAP-Rule" id="MF_00233"/>
    </source>
</evidence>
<gene>
    <name evidence="1" type="primary">lolB</name>
    <name type="ordered locus">Sama_2568</name>
</gene>
<protein>
    <recommendedName>
        <fullName evidence="1">Outer-membrane lipoprotein LolB</fullName>
    </recommendedName>
</protein>
<dbReference type="EMBL" id="CP000507">
    <property type="protein sequence ID" value="ABM00771.1"/>
    <property type="molecule type" value="Genomic_DNA"/>
</dbReference>
<dbReference type="RefSeq" id="WP_011760677.1">
    <property type="nucleotide sequence ID" value="NC_008700.1"/>
</dbReference>
<dbReference type="SMR" id="A1S8R4"/>
<dbReference type="STRING" id="326297.Sama_2568"/>
<dbReference type="KEGG" id="saz:Sama_2568"/>
<dbReference type="eggNOG" id="COG3017">
    <property type="taxonomic scope" value="Bacteria"/>
</dbReference>
<dbReference type="HOGENOM" id="CLU_092816_1_0_6"/>
<dbReference type="OrthoDB" id="9797618at2"/>
<dbReference type="Proteomes" id="UP000009175">
    <property type="component" value="Chromosome"/>
</dbReference>
<dbReference type="GO" id="GO:0009279">
    <property type="term" value="C:cell outer membrane"/>
    <property type="evidence" value="ECO:0007669"/>
    <property type="project" value="UniProtKB-SubCell"/>
</dbReference>
<dbReference type="GO" id="GO:0044874">
    <property type="term" value="P:lipoprotein localization to outer membrane"/>
    <property type="evidence" value="ECO:0007669"/>
    <property type="project" value="UniProtKB-UniRule"/>
</dbReference>
<dbReference type="GO" id="GO:0015031">
    <property type="term" value="P:protein transport"/>
    <property type="evidence" value="ECO:0007669"/>
    <property type="project" value="UniProtKB-KW"/>
</dbReference>
<dbReference type="CDD" id="cd16326">
    <property type="entry name" value="LolB"/>
    <property type="match status" value="1"/>
</dbReference>
<dbReference type="Gene3D" id="2.50.20.10">
    <property type="entry name" value="Lipoprotein localisation LolA/LolB/LppX"/>
    <property type="match status" value="1"/>
</dbReference>
<dbReference type="HAMAP" id="MF_00233">
    <property type="entry name" value="LolB"/>
    <property type="match status" value="1"/>
</dbReference>
<dbReference type="InterPro" id="IPR029046">
    <property type="entry name" value="LolA/LolB/LppX"/>
</dbReference>
<dbReference type="InterPro" id="IPR004565">
    <property type="entry name" value="OM_lipoprot_LolB"/>
</dbReference>
<dbReference type="NCBIfam" id="TIGR00548">
    <property type="entry name" value="lolB"/>
    <property type="match status" value="1"/>
</dbReference>
<dbReference type="Pfam" id="PF03550">
    <property type="entry name" value="LolB"/>
    <property type="match status" value="1"/>
</dbReference>
<dbReference type="SUPFAM" id="SSF89392">
    <property type="entry name" value="Prokaryotic lipoproteins and lipoprotein localization factors"/>
    <property type="match status" value="1"/>
</dbReference>
<dbReference type="PROSITE" id="PS51257">
    <property type="entry name" value="PROKAR_LIPOPROTEIN"/>
    <property type="match status" value="1"/>
</dbReference>
<keyword id="KW-0998">Cell outer membrane</keyword>
<keyword id="KW-0143">Chaperone</keyword>
<keyword id="KW-0449">Lipoprotein</keyword>
<keyword id="KW-0472">Membrane</keyword>
<keyword id="KW-0564">Palmitate</keyword>
<keyword id="KW-0653">Protein transport</keyword>
<keyword id="KW-1185">Reference proteome</keyword>
<keyword id="KW-0732">Signal</keyword>
<keyword id="KW-0813">Transport</keyword>
<feature type="signal peptide" evidence="1">
    <location>
        <begin position="1"/>
        <end position="23"/>
    </location>
</feature>
<feature type="chain" id="PRO_1000078258" description="Outer-membrane lipoprotein LolB">
    <location>
        <begin position="24"/>
        <end position="207"/>
    </location>
</feature>
<feature type="lipid moiety-binding region" description="N-palmitoyl cysteine" evidence="1">
    <location>
        <position position="24"/>
    </location>
</feature>
<feature type="lipid moiety-binding region" description="S-diacylglycerol cysteine" evidence="1">
    <location>
        <position position="24"/>
    </location>
</feature>
<accession>A1S8R4</accession>
<reference key="1">
    <citation type="submission" date="2006-12" db="EMBL/GenBank/DDBJ databases">
        <title>Complete sequence of Shewanella amazonensis SB2B.</title>
        <authorList>
            <consortium name="US DOE Joint Genome Institute"/>
            <person name="Copeland A."/>
            <person name="Lucas S."/>
            <person name="Lapidus A."/>
            <person name="Barry K."/>
            <person name="Detter J.C."/>
            <person name="Glavina del Rio T."/>
            <person name="Hammon N."/>
            <person name="Israni S."/>
            <person name="Dalin E."/>
            <person name="Tice H."/>
            <person name="Pitluck S."/>
            <person name="Munk A.C."/>
            <person name="Brettin T."/>
            <person name="Bruce D."/>
            <person name="Han C."/>
            <person name="Tapia R."/>
            <person name="Gilna P."/>
            <person name="Schmutz J."/>
            <person name="Larimer F."/>
            <person name="Land M."/>
            <person name="Hauser L."/>
            <person name="Kyrpides N."/>
            <person name="Mikhailova N."/>
            <person name="Fredrickson J."/>
            <person name="Richardson P."/>
        </authorList>
    </citation>
    <scope>NUCLEOTIDE SEQUENCE [LARGE SCALE GENOMIC DNA]</scope>
    <source>
        <strain>ATCC BAA-1098 / SB2B</strain>
    </source>
</reference>
<organism>
    <name type="scientific">Shewanella amazonensis (strain ATCC BAA-1098 / SB2B)</name>
    <dbReference type="NCBI Taxonomy" id="326297"/>
    <lineage>
        <taxon>Bacteria</taxon>
        <taxon>Pseudomonadati</taxon>
        <taxon>Pseudomonadota</taxon>
        <taxon>Gammaproteobacteria</taxon>
        <taxon>Alteromonadales</taxon>
        <taxon>Shewanellaceae</taxon>
        <taxon>Shewanella</taxon>
    </lineage>
</organism>